<keyword id="KW-0963">Cytoplasm</keyword>
<keyword id="KW-0369">Histidine metabolism</keyword>
<keyword id="KW-0378">Hydrolase</keyword>
<keyword id="KW-0408">Iron</keyword>
<keyword id="KW-0479">Metal-binding</keyword>
<keyword id="KW-0862">Zinc</keyword>
<accession>Q48CD3</accession>
<organism>
    <name type="scientific">Pseudomonas savastanoi pv. phaseolicola (strain 1448A / Race 6)</name>
    <name type="common">Pseudomonas syringae pv. phaseolicola (strain 1448A / Race 6)</name>
    <dbReference type="NCBI Taxonomy" id="264730"/>
    <lineage>
        <taxon>Bacteria</taxon>
        <taxon>Pseudomonadati</taxon>
        <taxon>Pseudomonadota</taxon>
        <taxon>Gammaproteobacteria</taxon>
        <taxon>Pseudomonadales</taxon>
        <taxon>Pseudomonadaceae</taxon>
        <taxon>Pseudomonas</taxon>
    </lineage>
</organism>
<proteinExistence type="inferred from homology"/>
<comment type="function">
    <text evidence="1">Catalyzes the hydrolytic cleavage of the carbon-nitrogen bond in imidazolone-5-propanoate to yield N-formimidoyl-L-glutamate. It is the third step in the universal histidine degradation pathway.</text>
</comment>
<comment type="catalytic activity">
    <reaction evidence="1">
        <text>4-imidazolone-5-propanoate + H2O = N-formimidoyl-L-glutamate</text>
        <dbReference type="Rhea" id="RHEA:23660"/>
        <dbReference type="ChEBI" id="CHEBI:15377"/>
        <dbReference type="ChEBI" id="CHEBI:58928"/>
        <dbReference type="ChEBI" id="CHEBI:77893"/>
        <dbReference type="EC" id="3.5.2.7"/>
    </reaction>
</comment>
<comment type="cofactor">
    <cofactor evidence="1">
        <name>Zn(2+)</name>
        <dbReference type="ChEBI" id="CHEBI:29105"/>
    </cofactor>
    <cofactor evidence="1">
        <name>Fe(3+)</name>
        <dbReference type="ChEBI" id="CHEBI:29034"/>
    </cofactor>
    <text evidence="1">Binds 1 zinc or iron ion per subunit.</text>
</comment>
<comment type="pathway">
    <text evidence="1">Amino-acid degradation; L-histidine degradation into L-glutamate; N-formimidoyl-L-glutamate from L-histidine: step 3/3.</text>
</comment>
<comment type="subcellular location">
    <subcellularLocation>
        <location evidence="1">Cytoplasm</location>
    </subcellularLocation>
</comment>
<comment type="similarity">
    <text evidence="1">Belongs to the metallo-dependent hydrolases superfamily. HutI family.</text>
</comment>
<evidence type="ECO:0000255" key="1">
    <source>
        <dbReference type="HAMAP-Rule" id="MF_00372"/>
    </source>
</evidence>
<reference key="1">
    <citation type="journal article" date="2005" name="J. Bacteriol.">
        <title>Whole-genome sequence analysis of Pseudomonas syringae pv. phaseolicola 1448A reveals divergence among pathovars in genes involved in virulence and transposition.</title>
        <authorList>
            <person name="Joardar V."/>
            <person name="Lindeberg M."/>
            <person name="Jackson R.W."/>
            <person name="Selengut J."/>
            <person name="Dodson R."/>
            <person name="Brinkac L.M."/>
            <person name="Daugherty S.C."/>
            <person name="DeBoy R.T."/>
            <person name="Durkin A.S."/>
            <person name="Gwinn Giglio M."/>
            <person name="Madupu R."/>
            <person name="Nelson W.C."/>
            <person name="Rosovitz M.J."/>
            <person name="Sullivan S.A."/>
            <person name="Crabtree J."/>
            <person name="Creasy T."/>
            <person name="Davidsen T.M."/>
            <person name="Haft D.H."/>
            <person name="Zafar N."/>
            <person name="Zhou L."/>
            <person name="Halpin R."/>
            <person name="Holley T."/>
            <person name="Khouri H.M."/>
            <person name="Feldblyum T.V."/>
            <person name="White O."/>
            <person name="Fraser C.M."/>
            <person name="Chatterjee A.K."/>
            <person name="Cartinhour S."/>
            <person name="Schneider D."/>
            <person name="Mansfield J.W."/>
            <person name="Collmer A."/>
            <person name="Buell R."/>
        </authorList>
    </citation>
    <scope>NUCLEOTIDE SEQUENCE [LARGE SCALE GENOMIC DNA]</scope>
    <source>
        <strain>1448A / Race 6</strain>
    </source>
</reference>
<protein>
    <recommendedName>
        <fullName evidence="1">Imidazolonepropionase</fullName>
        <ecNumber evidence="1">3.5.2.7</ecNumber>
    </recommendedName>
    <alternativeName>
        <fullName evidence="1">Imidazolone-5-propionate hydrolase</fullName>
    </alternativeName>
</protein>
<sequence length="401" mass="43013">MKTLWKHCHIASMAHGKYSIIENAAIVTSGALIEWIGPETELAEPEHDNCIDLGGAWVTPGLIDCHTHTVFGGNRSGEFEQRLQGVSYAEIAAAGGGIASTVRATRAASEDELYASAERRLRHLLKDGVTTVEMKSGYGLDLENERKILRVIRRLGNTQPVTVRATCLAAHALPPEYADRAADYINHICNDMLPALAAEGLVDAVDAFCEYLAFSPAQVEQVFISAGQLALPVKLHAEQLSSLGGSSLAAHYKALSADHLEFMTEDDAVAMAAAGTVAVLLPGAFYFLRETQLPPMEALRKHGVPIAISTDLNPGTSPGLSLRLMLNMACTLFRMTPEEALAGVTFNAAKALGMSATHGSLEVGKVADFVAWDIERPADLAYWLGGDLDKRIVRHGVESSI</sequence>
<dbReference type="EC" id="3.5.2.7" evidence="1"/>
<dbReference type="EMBL" id="CP000058">
    <property type="protein sequence ID" value="AAZ33818.1"/>
    <property type="molecule type" value="Genomic_DNA"/>
</dbReference>
<dbReference type="RefSeq" id="WP_011169778.1">
    <property type="nucleotide sequence ID" value="NC_005773.3"/>
</dbReference>
<dbReference type="SMR" id="Q48CD3"/>
<dbReference type="KEGG" id="psp:PSPPH_4867"/>
<dbReference type="eggNOG" id="COG1228">
    <property type="taxonomic scope" value="Bacteria"/>
</dbReference>
<dbReference type="HOGENOM" id="CLU_041647_0_0_6"/>
<dbReference type="UniPathway" id="UPA00379">
    <property type="reaction ID" value="UER00551"/>
</dbReference>
<dbReference type="Proteomes" id="UP000000551">
    <property type="component" value="Chromosome"/>
</dbReference>
<dbReference type="GO" id="GO:0005737">
    <property type="term" value="C:cytoplasm"/>
    <property type="evidence" value="ECO:0007669"/>
    <property type="project" value="UniProtKB-SubCell"/>
</dbReference>
<dbReference type="GO" id="GO:0050480">
    <property type="term" value="F:imidazolonepropionase activity"/>
    <property type="evidence" value="ECO:0007669"/>
    <property type="project" value="UniProtKB-UniRule"/>
</dbReference>
<dbReference type="GO" id="GO:0005506">
    <property type="term" value="F:iron ion binding"/>
    <property type="evidence" value="ECO:0007669"/>
    <property type="project" value="UniProtKB-UniRule"/>
</dbReference>
<dbReference type="GO" id="GO:0008270">
    <property type="term" value="F:zinc ion binding"/>
    <property type="evidence" value="ECO:0007669"/>
    <property type="project" value="UniProtKB-UniRule"/>
</dbReference>
<dbReference type="GO" id="GO:0019556">
    <property type="term" value="P:L-histidine catabolic process to glutamate and formamide"/>
    <property type="evidence" value="ECO:0007669"/>
    <property type="project" value="UniProtKB-UniPathway"/>
</dbReference>
<dbReference type="GO" id="GO:0019557">
    <property type="term" value="P:L-histidine catabolic process to glutamate and formate"/>
    <property type="evidence" value="ECO:0007669"/>
    <property type="project" value="UniProtKB-UniPathway"/>
</dbReference>
<dbReference type="CDD" id="cd01296">
    <property type="entry name" value="Imidazolone-5PH"/>
    <property type="match status" value="1"/>
</dbReference>
<dbReference type="FunFam" id="3.20.20.140:FF:000007">
    <property type="entry name" value="Imidazolonepropionase"/>
    <property type="match status" value="1"/>
</dbReference>
<dbReference type="Gene3D" id="3.20.20.140">
    <property type="entry name" value="Metal-dependent hydrolases"/>
    <property type="match status" value="1"/>
</dbReference>
<dbReference type="Gene3D" id="2.30.40.10">
    <property type="entry name" value="Urease, subunit C, domain 1"/>
    <property type="match status" value="1"/>
</dbReference>
<dbReference type="HAMAP" id="MF_00372">
    <property type="entry name" value="HutI"/>
    <property type="match status" value="1"/>
</dbReference>
<dbReference type="InterPro" id="IPR006680">
    <property type="entry name" value="Amidohydro-rel"/>
</dbReference>
<dbReference type="InterPro" id="IPR005920">
    <property type="entry name" value="HutI"/>
</dbReference>
<dbReference type="InterPro" id="IPR011059">
    <property type="entry name" value="Metal-dep_hydrolase_composite"/>
</dbReference>
<dbReference type="InterPro" id="IPR032466">
    <property type="entry name" value="Metal_Hydrolase"/>
</dbReference>
<dbReference type="NCBIfam" id="TIGR01224">
    <property type="entry name" value="hutI"/>
    <property type="match status" value="1"/>
</dbReference>
<dbReference type="PANTHER" id="PTHR42752">
    <property type="entry name" value="IMIDAZOLONEPROPIONASE"/>
    <property type="match status" value="1"/>
</dbReference>
<dbReference type="PANTHER" id="PTHR42752:SF1">
    <property type="entry name" value="IMIDAZOLONEPROPIONASE-RELATED"/>
    <property type="match status" value="1"/>
</dbReference>
<dbReference type="Pfam" id="PF01979">
    <property type="entry name" value="Amidohydro_1"/>
    <property type="match status" value="1"/>
</dbReference>
<dbReference type="SUPFAM" id="SSF51338">
    <property type="entry name" value="Composite domain of metallo-dependent hydrolases"/>
    <property type="match status" value="1"/>
</dbReference>
<dbReference type="SUPFAM" id="SSF51556">
    <property type="entry name" value="Metallo-dependent hydrolases"/>
    <property type="match status" value="1"/>
</dbReference>
<feature type="chain" id="PRO_0000306490" description="Imidazolonepropionase">
    <location>
        <begin position="1"/>
        <end position="401"/>
    </location>
</feature>
<feature type="binding site" evidence="1">
    <location>
        <position position="66"/>
    </location>
    <ligand>
        <name>Fe(3+)</name>
        <dbReference type="ChEBI" id="CHEBI:29034"/>
    </ligand>
</feature>
<feature type="binding site" evidence="1">
    <location>
        <position position="66"/>
    </location>
    <ligand>
        <name>Zn(2+)</name>
        <dbReference type="ChEBI" id="CHEBI:29105"/>
    </ligand>
</feature>
<feature type="binding site" evidence="1">
    <location>
        <position position="68"/>
    </location>
    <ligand>
        <name>Fe(3+)</name>
        <dbReference type="ChEBI" id="CHEBI:29034"/>
    </ligand>
</feature>
<feature type="binding site" evidence="1">
    <location>
        <position position="68"/>
    </location>
    <ligand>
        <name>Zn(2+)</name>
        <dbReference type="ChEBI" id="CHEBI:29105"/>
    </ligand>
</feature>
<feature type="binding site" evidence="1">
    <location>
        <position position="75"/>
    </location>
    <ligand>
        <name>4-imidazolone-5-propanoate</name>
        <dbReference type="ChEBI" id="CHEBI:77893"/>
    </ligand>
</feature>
<feature type="binding site" evidence="1">
    <location>
        <position position="138"/>
    </location>
    <ligand>
        <name>4-imidazolone-5-propanoate</name>
        <dbReference type="ChEBI" id="CHEBI:77893"/>
    </ligand>
</feature>
<feature type="binding site" evidence="1">
    <location>
        <position position="138"/>
    </location>
    <ligand>
        <name>N-formimidoyl-L-glutamate</name>
        <dbReference type="ChEBI" id="CHEBI:58928"/>
    </ligand>
</feature>
<feature type="binding site" evidence="1">
    <location>
        <position position="171"/>
    </location>
    <ligand>
        <name>4-imidazolone-5-propanoate</name>
        <dbReference type="ChEBI" id="CHEBI:77893"/>
    </ligand>
</feature>
<feature type="binding site" evidence="1">
    <location>
        <position position="236"/>
    </location>
    <ligand>
        <name>Fe(3+)</name>
        <dbReference type="ChEBI" id="CHEBI:29034"/>
    </ligand>
</feature>
<feature type="binding site" evidence="1">
    <location>
        <position position="236"/>
    </location>
    <ligand>
        <name>Zn(2+)</name>
        <dbReference type="ChEBI" id="CHEBI:29105"/>
    </ligand>
</feature>
<feature type="binding site" evidence="1">
    <location>
        <position position="239"/>
    </location>
    <ligand>
        <name>4-imidazolone-5-propanoate</name>
        <dbReference type="ChEBI" id="CHEBI:77893"/>
    </ligand>
</feature>
<feature type="binding site" evidence="1">
    <location>
        <position position="311"/>
    </location>
    <ligand>
        <name>Fe(3+)</name>
        <dbReference type="ChEBI" id="CHEBI:29034"/>
    </ligand>
</feature>
<feature type="binding site" evidence="1">
    <location>
        <position position="311"/>
    </location>
    <ligand>
        <name>Zn(2+)</name>
        <dbReference type="ChEBI" id="CHEBI:29105"/>
    </ligand>
</feature>
<feature type="binding site" evidence="1">
    <location>
        <position position="313"/>
    </location>
    <ligand>
        <name>N-formimidoyl-L-glutamate</name>
        <dbReference type="ChEBI" id="CHEBI:58928"/>
    </ligand>
</feature>
<feature type="binding site" evidence="1">
    <location>
        <position position="315"/>
    </location>
    <ligand>
        <name>N-formimidoyl-L-glutamate</name>
        <dbReference type="ChEBI" id="CHEBI:58928"/>
    </ligand>
</feature>
<feature type="binding site" evidence="1">
    <location>
        <position position="316"/>
    </location>
    <ligand>
        <name>4-imidazolone-5-propanoate</name>
        <dbReference type="ChEBI" id="CHEBI:77893"/>
    </ligand>
</feature>
<gene>
    <name evidence="1" type="primary">hutI</name>
    <name type="ordered locus">PSPPH_4867</name>
</gene>
<name>HUTI_PSE14</name>